<sequence>MAVPKKKTSKSKRDKRKATWKRKAALQAQRALSLGKSVLTGRAKGFVYPAQDEEETEE</sequence>
<keyword id="KW-1185">Reference proteome</keyword>
<keyword id="KW-0687">Ribonucleoprotein</keyword>
<keyword id="KW-0689">Ribosomal protein</keyword>
<name>RL32_SYNE7</name>
<dbReference type="EMBL" id="CP000100">
    <property type="protein sequence ID" value="ABB57027.1"/>
    <property type="molecule type" value="Genomic_DNA"/>
</dbReference>
<dbReference type="RefSeq" id="WP_011242859.1">
    <property type="nucleotide sequence ID" value="NZ_JACJTX010000003.1"/>
</dbReference>
<dbReference type="SMR" id="Q31PJ2"/>
<dbReference type="STRING" id="1140.Synpcc7942_0997"/>
<dbReference type="PaxDb" id="1140-Synpcc7942_0997"/>
<dbReference type="GeneID" id="72429850"/>
<dbReference type="KEGG" id="syf:Synpcc7942_0997"/>
<dbReference type="eggNOG" id="COG0333">
    <property type="taxonomic scope" value="Bacteria"/>
</dbReference>
<dbReference type="HOGENOM" id="CLU_199882_0_0_3"/>
<dbReference type="OrthoDB" id="541730at2"/>
<dbReference type="BioCyc" id="SYNEL:SYNPCC7942_0997-MONOMER"/>
<dbReference type="Proteomes" id="UP000889800">
    <property type="component" value="Chromosome"/>
</dbReference>
<dbReference type="GO" id="GO:0015934">
    <property type="term" value="C:large ribosomal subunit"/>
    <property type="evidence" value="ECO:0007669"/>
    <property type="project" value="InterPro"/>
</dbReference>
<dbReference type="GO" id="GO:0003735">
    <property type="term" value="F:structural constituent of ribosome"/>
    <property type="evidence" value="ECO:0007669"/>
    <property type="project" value="InterPro"/>
</dbReference>
<dbReference type="GO" id="GO:0006412">
    <property type="term" value="P:translation"/>
    <property type="evidence" value="ECO:0007669"/>
    <property type="project" value="UniProtKB-UniRule"/>
</dbReference>
<dbReference type="HAMAP" id="MF_00340">
    <property type="entry name" value="Ribosomal_bL32"/>
    <property type="match status" value="1"/>
</dbReference>
<dbReference type="InterPro" id="IPR002677">
    <property type="entry name" value="Ribosomal_bL32"/>
</dbReference>
<dbReference type="InterPro" id="IPR044958">
    <property type="entry name" value="Ribosomal_bL32_plant/cyanobact"/>
</dbReference>
<dbReference type="InterPro" id="IPR011332">
    <property type="entry name" value="Ribosomal_zn-bd"/>
</dbReference>
<dbReference type="NCBIfam" id="TIGR01031">
    <property type="entry name" value="rpmF_bact"/>
    <property type="match status" value="1"/>
</dbReference>
<dbReference type="PANTHER" id="PTHR36083">
    <property type="entry name" value="50S RIBOSOMAL PROTEIN L32, CHLOROPLASTIC"/>
    <property type="match status" value="1"/>
</dbReference>
<dbReference type="PANTHER" id="PTHR36083:SF1">
    <property type="entry name" value="LARGE RIBOSOMAL SUBUNIT PROTEIN BL32C"/>
    <property type="match status" value="1"/>
</dbReference>
<dbReference type="Pfam" id="PF01783">
    <property type="entry name" value="Ribosomal_L32p"/>
    <property type="match status" value="1"/>
</dbReference>
<dbReference type="SUPFAM" id="SSF57829">
    <property type="entry name" value="Zn-binding ribosomal proteins"/>
    <property type="match status" value="1"/>
</dbReference>
<protein>
    <recommendedName>
        <fullName evidence="1">Large ribosomal subunit protein bL32</fullName>
    </recommendedName>
    <alternativeName>
        <fullName evidence="3">50S ribosomal protein L32</fullName>
    </alternativeName>
</protein>
<organism>
    <name type="scientific">Synechococcus elongatus (strain ATCC 33912 / PCC 7942 / FACHB-805)</name>
    <name type="common">Anacystis nidulans R2</name>
    <dbReference type="NCBI Taxonomy" id="1140"/>
    <lineage>
        <taxon>Bacteria</taxon>
        <taxon>Bacillati</taxon>
        <taxon>Cyanobacteriota</taxon>
        <taxon>Cyanophyceae</taxon>
        <taxon>Synechococcales</taxon>
        <taxon>Synechococcaceae</taxon>
        <taxon>Synechococcus</taxon>
    </lineage>
</organism>
<evidence type="ECO:0000255" key="1">
    <source>
        <dbReference type="HAMAP-Rule" id="MF_00340"/>
    </source>
</evidence>
<evidence type="ECO:0000256" key="2">
    <source>
        <dbReference type="SAM" id="MobiDB-lite"/>
    </source>
</evidence>
<evidence type="ECO:0000305" key="3"/>
<comment type="similarity">
    <text evidence="1">Belongs to the bacterial ribosomal protein bL32 family.</text>
</comment>
<reference key="1">
    <citation type="submission" date="2005-08" db="EMBL/GenBank/DDBJ databases">
        <title>Complete sequence of chromosome 1 of Synechococcus elongatus PCC 7942.</title>
        <authorList>
            <consortium name="US DOE Joint Genome Institute"/>
            <person name="Copeland A."/>
            <person name="Lucas S."/>
            <person name="Lapidus A."/>
            <person name="Barry K."/>
            <person name="Detter J.C."/>
            <person name="Glavina T."/>
            <person name="Hammon N."/>
            <person name="Israni S."/>
            <person name="Pitluck S."/>
            <person name="Schmutz J."/>
            <person name="Larimer F."/>
            <person name="Land M."/>
            <person name="Kyrpides N."/>
            <person name="Lykidis A."/>
            <person name="Golden S."/>
            <person name="Richardson P."/>
        </authorList>
    </citation>
    <scope>NUCLEOTIDE SEQUENCE [LARGE SCALE GENOMIC DNA]</scope>
    <source>
        <strain>ATCC 33912 / PCC 7942 / FACHB-805</strain>
    </source>
</reference>
<gene>
    <name evidence="1" type="primary">rpmF</name>
    <name evidence="1" type="synonym">rpl32</name>
    <name type="ordered locus">Synpcc7942_0997</name>
</gene>
<accession>Q31PJ2</accession>
<proteinExistence type="inferred from homology"/>
<feature type="chain" id="PRO_0000296587" description="Large ribosomal subunit protein bL32">
    <location>
        <begin position="1"/>
        <end position="58"/>
    </location>
</feature>
<feature type="region of interest" description="Disordered" evidence="2">
    <location>
        <begin position="1"/>
        <end position="24"/>
    </location>
</feature>